<proteinExistence type="evidence at protein level"/>
<reference key="1">
    <citation type="journal article" date="1992" name="J. Biol. Chem.">
        <title>Molecular and immunological characterization of ADP-ribosylarginine hydrolases.</title>
        <authorList>
            <person name="Moss J."/>
            <person name="Stanley S.J."/>
            <person name="Nightingale M.S."/>
            <person name="Murtagh J.J. Jr."/>
            <person name="Monaco L."/>
            <person name="Mishima K."/>
            <person name="Chen H.C."/>
            <person name="Williamson K.C."/>
            <person name="Tsai S.C."/>
        </authorList>
    </citation>
    <scope>NUCLEOTIDE SEQUENCE [MRNA]</scope>
    <source>
        <tissue>Brain</tissue>
    </source>
</reference>
<reference key="2">
    <citation type="journal article" date="2004" name="Genome Res.">
        <title>The status, quality, and expansion of the NIH full-length cDNA project: the Mammalian Gene Collection (MGC).</title>
        <authorList>
            <consortium name="The MGC Project Team"/>
        </authorList>
    </citation>
    <scope>NUCLEOTIDE SEQUENCE [LARGE SCALE MRNA]</scope>
    <source>
        <tissue>Testis</tissue>
    </source>
</reference>
<reference key="3">
    <citation type="submission" date="2007-04" db="UniProtKB">
        <authorList>
            <person name="Lubec G."/>
            <person name="Afjehi-Sadat L."/>
            <person name="Chen W.-Q."/>
        </authorList>
    </citation>
    <scope>PROTEIN SEQUENCE OF 147-165</scope>
    <scope>IDENTIFICATION BY MASS SPECTROMETRY</scope>
    <source>
        <strain>Sprague-Dawley</strain>
        <tissue>Hippocampus</tissue>
        <tissue>Spinal cord</tissue>
    </source>
</reference>
<sequence>MGGGLIERYVAAMVLSAAGDTLGYFNGKWEFLRDGEKIHRQLAQMGDLEAIDVAQWRVSDDTIMHLATAEALMEAGSSPDLPQLYSLLAKHYRDCMGDMDGRAPGGACMQNAMQLDPDRADGWRIPFNSHEGGCGAAMRAMCIGLRFPHPSQLDTLIQVSIESGRMTHHHPTGYLGSLASALFTAYAVNGKSPRQWGKGLMEVLPEAKAYVTQSGYFVKENLQHWSYFEKEWEKYLELRGILDGKSAPVFPKPFGVKERDQFYIEVSYSGWGGSSGHDAPMIAYDALLAAGDSWKELAHRAFFHGGDSDSTATIAGCWWGVMHGFKGVNPSNYEKLEYRQRLEEAGRALYSLGSKEDTILGP</sequence>
<organism>
    <name type="scientific">Rattus norvegicus</name>
    <name type="common">Rat</name>
    <dbReference type="NCBI Taxonomy" id="10116"/>
    <lineage>
        <taxon>Eukaryota</taxon>
        <taxon>Metazoa</taxon>
        <taxon>Chordata</taxon>
        <taxon>Craniata</taxon>
        <taxon>Vertebrata</taxon>
        <taxon>Euteleostomi</taxon>
        <taxon>Mammalia</taxon>
        <taxon>Eutheria</taxon>
        <taxon>Euarchontoglires</taxon>
        <taxon>Glires</taxon>
        <taxon>Rodentia</taxon>
        <taxon>Myomorpha</taxon>
        <taxon>Muroidea</taxon>
        <taxon>Muridae</taxon>
        <taxon>Murinae</taxon>
        <taxon>Rattus</taxon>
    </lineage>
</organism>
<name>ADPRH_RAT</name>
<feature type="chain" id="PRO_0000157285" description="ADP-ribosylhydrolase ARH1">
    <location>
        <begin position="1"/>
        <end position="362"/>
    </location>
</feature>
<feature type="region of interest" description="Substrate" evidence="1">
    <location>
        <begin position="106"/>
        <end position="108"/>
    </location>
</feature>
<feature type="region of interest" description="Substrate" evidence="1">
    <location>
        <begin position="168"/>
        <end position="170"/>
    </location>
</feature>
<feature type="region of interest" description="Substrate" evidence="1">
    <location>
        <begin position="268"/>
        <end position="270"/>
    </location>
</feature>
<feature type="region of interest" description="Substrate" evidence="1">
    <location>
        <begin position="274"/>
        <end position="275"/>
    </location>
</feature>
<feature type="binding site" evidence="1">
    <location>
        <position position="59"/>
    </location>
    <ligand>
        <name>Mg(2+)</name>
        <dbReference type="ChEBI" id="CHEBI:18420"/>
        <label>1</label>
    </ligand>
</feature>
<feature type="binding site" evidence="1">
    <location>
        <position position="60"/>
    </location>
    <ligand>
        <name>Mg(2+)</name>
        <dbReference type="ChEBI" id="CHEBI:18420"/>
        <label>1</label>
    </ligand>
</feature>
<feature type="binding site" evidence="1">
    <location>
        <position position="61"/>
    </location>
    <ligand>
        <name>Mg(2+)</name>
        <dbReference type="ChEBI" id="CHEBI:18420"/>
        <label>1</label>
    </ligand>
</feature>
<feature type="binding site" evidence="1">
    <location>
        <position position="90"/>
    </location>
    <ligand>
        <name>substrate</name>
    </ligand>
</feature>
<feature type="binding site" evidence="1">
    <location>
        <position position="129"/>
    </location>
    <ligand>
        <name>substrate</name>
    </ligand>
</feature>
<feature type="binding site" evidence="1">
    <location>
        <position position="135"/>
    </location>
    <ligand>
        <name>substrate</name>
    </ligand>
</feature>
<feature type="binding site" evidence="1">
    <location>
        <position position="307"/>
    </location>
    <ligand>
        <name>Mg(2+)</name>
        <dbReference type="ChEBI" id="CHEBI:18420"/>
        <label>2</label>
    </ligand>
</feature>
<feature type="binding site" evidence="1">
    <location>
        <position position="309"/>
    </location>
    <ligand>
        <name>Mg(2+)</name>
        <dbReference type="ChEBI" id="CHEBI:18420"/>
        <label>1</label>
    </ligand>
</feature>
<feature type="binding site" evidence="1">
    <location>
        <position position="309"/>
    </location>
    <ligand>
        <name>Mg(2+)</name>
        <dbReference type="ChEBI" id="CHEBI:18420"/>
        <label>2</label>
    </ligand>
</feature>
<feature type="binding site" evidence="1">
    <location>
        <position position="310"/>
    </location>
    <ligand>
        <name>Mg(2+)</name>
        <dbReference type="ChEBI" id="CHEBI:18420"/>
        <label>2</label>
    </ligand>
</feature>
<feature type="sequence conflict" description="In Ref. 1; AAA40691." evidence="2" ref="1">
    <original>K</original>
    <variation>Q</variation>
    <location>
        <position position="252"/>
    </location>
</feature>
<comment type="function">
    <text evidence="1">Specifically acts as an arginine mono-ADP-ribosylhydrolase by mediating the removal of mono-ADP-ribose attached to arginine residues on proteins.</text>
</comment>
<comment type="catalytic activity">
    <reaction evidence="1">
        <text>N(omega)-(ADP-D-ribosyl)-L-arginyl-[protein] + H2O = ADP-D-ribose + L-arginyl-[protein]</text>
        <dbReference type="Rhea" id="RHEA:14885"/>
        <dbReference type="Rhea" id="RHEA-COMP:10532"/>
        <dbReference type="Rhea" id="RHEA-COMP:15087"/>
        <dbReference type="ChEBI" id="CHEBI:15377"/>
        <dbReference type="ChEBI" id="CHEBI:29965"/>
        <dbReference type="ChEBI" id="CHEBI:57967"/>
        <dbReference type="ChEBI" id="CHEBI:142554"/>
        <dbReference type="EC" id="3.2.2.19"/>
    </reaction>
</comment>
<comment type="catalytic activity">
    <reaction evidence="1">
        <text>alpha-NAD(+) + H2O = ADP-D-ribose + nicotinamide + H(+)</text>
        <dbReference type="Rhea" id="RHEA:68792"/>
        <dbReference type="ChEBI" id="CHEBI:15377"/>
        <dbReference type="ChEBI" id="CHEBI:15378"/>
        <dbReference type="ChEBI" id="CHEBI:17154"/>
        <dbReference type="ChEBI" id="CHEBI:57967"/>
        <dbReference type="ChEBI" id="CHEBI:77017"/>
    </reaction>
</comment>
<comment type="cofactor">
    <cofactor evidence="1">
        <name>Mg(2+)</name>
        <dbReference type="ChEBI" id="CHEBI:18420"/>
    </cofactor>
    <text evidence="1">Binds 2 magnesium ions per subunit.</text>
</comment>
<comment type="activity regulation">
    <text>Its activity is synergistically stimulated by magnesium and dithiothreitol (DTT) in vitro.</text>
</comment>
<comment type="subunit">
    <text evidence="1">Monomer.</text>
</comment>
<comment type="similarity">
    <text evidence="2">Belongs to the ADP-ribosylglycohydrolase family.</text>
</comment>
<gene>
    <name type="primary">Adprh</name>
    <name type="synonym">Arh1</name>
</gene>
<protein>
    <recommendedName>
        <fullName evidence="2">ADP-ribosylhydrolase ARH1</fullName>
        <ecNumber evidence="1">3.2.2.19</ecNumber>
    </recommendedName>
    <alternativeName>
        <fullName>ADP-ribose-L-arginine cleaving enzyme</fullName>
    </alternativeName>
    <alternativeName>
        <fullName>[Protein ADP-ribosylarginine] hydrolase</fullName>
        <shortName>ADP-ribosylarginine hydrolase</shortName>
    </alternativeName>
</protein>
<evidence type="ECO:0000250" key="1">
    <source>
        <dbReference type="UniProtKB" id="P54922"/>
    </source>
</evidence>
<evidence type="ECO:0000305" key="2"/>
<keyword id="KW-0903">Direct protein sequencing</keyword>
<keyword id="KW-0378">Hydrolase</keyword>
<keyword id="KW-0460">Magnesium</keyword>
<keyword id="KW-0479">Metal-binding</keyword>
<keyword id="KW-1185">Reference proteome</keyword>
<dbReference type="EC" id="3.2.2.19" evidence="1"/>
<dbReference type="EMBL" id="M86341">
    <property type="protein sequence ID" value="AAA40691.1"/>
    <property type="molecule type" value="mRNA"/>
</dbReference>
<dbReference type="EMBL" id="BC082065">
    <property type="protein sequence ID" value="AAH82065.1"/>
    <property type="molecule type" value="mRNA"/>
</dbReference>
<dbReference type="PIR" id="A38135">
    <property type="entry name" value="A38135"/>
</dbReference>
<dbReference type="RefSeq" id="NP_899154.2">
    <property type="nucleotide sequence ID" value="NM_183325.2"/>
</dbReference>
<dbReference type="RefSeq" id="XP_006248422.1">
    <property type="nucleotide sequence ID" value="XM_006248360.5"/>
</dbReference>
<dbReference type="SMR" id="Q02589"/>
<dbReference type="FunCoup" id="Q02589">
    <property type="interactions" value="360"/>
</dbReference>
<dbReference type="STRING" id="10116.ENSRNOP00000034815"/>
<dbReference type="iPTMnet" id="Q02589"/>
<dbReference type="PhosphoSitePlus" id="Q02589"/>
<dbReference type="jPOST" id="Q02589"/>
<dbReference type="PaxDb" id="10116-ENSRNOP00000034815"/>
<dbReference type="DNASU" id="25371"/>
<dbReference type="Ensembl" id="ENSRNOT00000038439.5">
    <property type="protein sequence ID" value="ENSRNOP00000034815.3"/>
    <property type="gene ID" value="ENSRNOG00000027260.5"/>
</dbReference>
<dbReference type="GeneID" id="25371"/>
<dbReference type="KEGG" id="rno:25371"/>
<dbReference type="UCSC" id="RGD:2052">
    <property type="organism name" value="rat"/>
</dbReference>
<dbReference type="AGR" id="RGD:2052"/>
<dbReference type="CTD" id="141"/>
<dbReference type="RGD" id="2052">
    <property type="gene designation" value="Adprh"/>
</dbReference>
<dbReference type="eggNOG" id="ENOG502QPMI">
    <property type="taxonomic scope" value="Eukaryota"/>
</dbReference>
<dbReference type="GeneTree" id="ENSGT00530000063627"/>
<dbReference type="HOGENOM" id="CLU_047061_0_0_1"/>
<dbReference type="InParanoid" id="Q02589"/>
<dbReference type="OMA" id="RKWEFLQ"/>
<dbReference type="OrthoDB" id="10250509at2759"/>
<dbReference type="PhylomeDB" id="Q02589"/>
<dbReference type="TreeFam" id="TF329417"/>
<dbReference type="PRO" id="PR:Q02589"/>
<dbReference type="Proteomes" id="UP000002494">
    <property type="component" value="Chromosome 11"/>
</dbReference>
<dbReference type="Bgee" id="ENSRNOG00000027260">
    <property type="expression patterns" value="Expressed in thymus and 20 other cell types or tissues"/>
</dbReference>
<dbReference type="GO" id="GO:0005615">
    <property type="term" value="C:extracellular space"/>
    <property type="evidence" value="ECO:0000314"/>
    <property type="project" value="RGD"/>
</dbReference>
<dbReference type="GO" id="GO:0003875">
    <property type="term" value="F:ADP-ribosylarginine hydrolase activity"/>
    <property type="evidence" value="ECO:0000314"/>
    <property type="project" value="RGD"/>
</dbReference>
<dbReference type="GO" id="GO:0000287">
    <property type="term" value="F:magnesium ion binding"/>
    <property type="evidence" value="ECO:0000250"/>
    <property type="project" value="UniProtKB"/>
</dbReference>
<dbReference type="GO" id="GO:0030955">
    <property type="term" value="F:potassium ion binding"/>
    <property type="evidence" value="ECO:0000250"/>
    <property type="project" value="UniProtKB"/>
</dbReference>
<dbReference type="GO" id="GO:0051725">
    <property type="term" value="P:protein de-ADP-ribosylation"/>
    <property type="evidence" value="ECO:0000250"/>
    <property type="project" value="UniProtKB"/>
</dbReference>
<dbReference type="GO" id="GO:0036211">
    <property type="term" value="P:protein modification process"/>
    <property type="evidence" value="ECO:0000315"/>
    <property type="project" value="UniProtKB"/>
</dbReference>
<dbReference type="FunFam" id="1.10.4080.10:FF:000002">
    <property type="entry name" value="ADP-ribosylarginine hydrolase isoform X1"/>
    <property type="match status" value="1"/>
</dbReference>
<dbReference type="Gene3D" id="1.10.4080.10">
    <property type="entry name" value="ADP-ribosylation/Crystallin J1"/>
    <property type="match status" value="1"/>
</dbReference>
<dbReference type="InterPro" id="IPR012108">
    <property type="entry name" value="ADP-ribosylarg_hydro"/>
</dbReference>
<dbReference type="InterPro" id="IPR050792">
    <property type="entry name" value="ADP-ribosylglycohydrolase"/>
</dbReference>
<dbReference type="InterPro" id="IPR005502">
    <property type="entry name" value="Ribosyl_crysJ1"/>
</dbReference>
<dbReference type="InterPro" id="IPR036705">
    <property type="entry name" value="Ribosyl_crysJ1_sf"/>
</dbReference>
<dbReference type="PANTHER" id="PTHR16222">
    <property type="entry name" value="ADP-RIBOSYLGLYCOHYDROLASE"/>
    <property type="match status" value="1"/>
</dbReference>
<dbReference type="PANTHER" id="PTHR16222:SF26">
    <property type="entry name" value="ADP-RIBOSYLHYDROLASE ARH1"/>
    <property type="match status" value="1"/>
</dbReference>
<dbReference type="Pfam" id="PF03747">
    <property type="entry name" value="ADP_ribosyl_GH"/>
    <property type="match status" value="1"/>
</dbReference>
<dbReference type="PIRSF" id="PIRSF016939">
    <property type="entry name" value="ADP_ribslarg_hdr"/>
    <property type="match status" value="1"/>
</dbReference>
<dbReference type="SUPFAM" id="SSF101478">
    <property type="entry name" value="ADP-ribosylglycohydrolase"/>
    <property type="match status" value="1"/>
</dbReference>
<accession>Q02589</accession>
<accession>Q66H27</accession>